<protein>
    <recommendedName>
        <fullName evidence="1">Imidazole glycerol phosphate synthase subunit HisF</fullName>
        <ecNumber evidence="1">4.3.2.10</ecNumber>
    </recommendedName>
    <alternativeName>
        <fullName evidence="1">IGP synthase cyclase subunit</fullName>
    </alternativeName>
    <alternativeName>
        <fullName evidence="1">IGP synthase subunit HisF</fullName>
    </alternativeName>
    <alternativeName>
        <fullName evidence="1">ImGP synthase subunit HisF</fullName>
        <shortName evidence="1">IGPS subunit HisF</shortName>
    </alternativeName>
</protein>
<evidence type="ECO:0000255" key="1">
    <source>
        <dbReference type="HAMAP-Rule" id="MF_01013"/>
    </source>
</evidence>
<name>HIS6_CAMFF</name>
<accession>A0RRT8</accession>
<keyword id="KW-0028">Amino-acid biosynthesis</keyword>
<keyword id="KW-0963">Cytoplasm</keyword>
<keyword id="KW-0368">Histidine biosynthesis</keyword>
<keyword id="KW-0456">Lyase</keyword>
<reference key="1">
    <citation type="submission" date="2006-11" db="EMBL/GenBank/DDBJ databases">
        <title>Sequence of Campylobacter fetus subsp. fetus 82-40.</title>
        <authorList>
            <person name="Fouts D.E."/>
            <person name="Nelson K.E."/>
        </authorList>
    </citation>
    <scope>NUCLEOTIDE SEQUENCE [LARGE SCALE GENOMIC DNA]</scope>
    <source>
        <strain>82-40</strain>
    </source>
</reference>
<feature type="chain" id="PRO_1000063040" description="Imidazole glycerol phosphate synthase subunit HisF">
    <location>
        <begin position="1"/>
        <end position="252"/>
    </location>
</feature>
<feature type="active site" evidence="1">
    <location>
        <position position="13"/>
    </location>
</feature>
<feature type="active site" evidence="1">
    <location>
        <position position="132"/>
    </location>
</feature>
<gene>
    <name evidence="1" type="primary">hisF</name>
    <name type="ordered locus">CFF8240_1814</name>
</gene>
<comment type="function">
    <text evidence="1">IGPS catalyzes the conversion of PRFAR and glutamine to IGP, AICAR and glutamate. The HisF subunit catalyzes the cyclization activity that produces IGP and AICAR from PRFAR using the ammonia provided by the HisH subunit.</text>
</comment>
<comment type="catalytic activity">
    <reaction evidence="1">
        <text>5-[(5-phospho-1-deoxy-D-ribulos-1-ylimino)methylamino]-1-(5-phospho-beta-D-ribosyl)imidazole-4-carboxamide + L-glutamine = D-erythro-1-(imidazol-4-yl)glycerol 3-phosphate + 5-amino-1-(5-phospho-beta-D-ribosyl)imidazole-4-carboxamide + L-glutamate + H(+)</text>
        <dbReference type="Rhea" id="RHEA:24793"/>
        <dbReference type="ChEBI" id="CHEBI:15378"/>
        <dbReference type="ChEBI" id="CHEBI:29985"/>
        <dbReference type="ChEBI" id="CHEBI:58278"/>
        <dbReference type="ChEBI" id="CHEBI:58359"/>
        <dbReference type="ChEBI" id="CHEBI:58475"/>
        <dbReference type="ChEBI" id="CHEBI:58525"/>
        <dbReference type="EC" id="4.3.2.10"/>
    </reaction>
</comment>
<comment type="pathway">
    <text evidence="1">Amino-acid biosynthesis; L-histidine biosynthesis; L-histidine from 5-phospho-alpha-D-ribose 1-diphosphate: step 5/9.</text>
</comment>
<comment type="subunit">
    <text evidence="1">Heterodimer of HisH and HisF.</text>
</comment>
<comment type="subcellular location">
    <subcellularLocation>
        <location evidence="1">Cytoplasm</location>
    </subcellularLocation>
</comment>
<comment type="similarity">
    <text evidence="1">Belongs to the HisA/HisF family.</text>
</comment>
<organism>
    <name type="scientific">Campylobacter fetus subsp. fetus (strain 82-40)</name>
    <dbReference type="NCBI Taxonomy" id="360106"/>
    <lineage>
        <taxon>Bacteria</taxon>
        <taxon>Pseudomonadati</taxon>
        <taxon>Campylobacterota</taxon>
        <taxon>Epsilonproteobacteria</taxon>
        <taxon>Campylobacterales</taxon>
        <taxon>Campylobacteraceae</taxon>
        <taxon>Campylobacter</taxon>
    </lineage>
</organism>
<dbReference type="EC" id="4.3.2.10" evidence="1"/>
<dbReference type="EMBL" id="CP000487">
    <property type="protein sequence ID" value="ABK82623.1"/>
    <property type="molecule type" value="Genomic_DNA"/>
</dbReference>
<dbReference type="RefSeq" id="WP_002847885.1">
    <property type="nucleotide sequence ID" value="NC_008599.1"/>
</dbReference>
<dbReference type="SMR" id="A0RRT8"/>
<dbReference type="GeneID" id="61065623"/>
<dbReference type="KEGG" id="cff:CFF8240_1814"/>
<dbReference type="eggNOG" id="COG0107">
    <property type="taxonomic scope" value="Bacteria"/>
</dbReference>
<dbReference type="HOGENOM" id="CLU_048577_4_0_7"/>
<dbReference type="UniPathway" id="UPA00031">
    <property type="reaction ID" value="UER00010"/>
</dbReference>
<dbReference type="Proteomes" id="UP000000760">
    <property type="component" value="Chromosome"/>
</dbReference>
<dbReference type="GO" id="GO:0005737">
    <property type="term" value="C:cytoplasm"/>
    <property type="evidence" value="ECO:0007669"/>
    <property type="project" value="UniProtKB-SubCell"/>
</dbReference>
<dbReference type="GO" id="GO:0000107">
    <property type="term" value="F:imidazoleglycerol-phosphate synthase activity"/>
    <property type="evidence" value="ECO:0007669"/>
    <property type="project" value="UniProtKB-UniRule"/>
</dbReference>
<dbReference type="GO" id="GO:0016829">
    <property type="term" value="F:lyase activity"/>
    <property type="evidence" value="ECO:0007669"/>
    <property type="project" value="UniProtKB-KW"/>
</dbReference>
<dbReference type="GO" id="GO:0000105">
    <property type="term" value="P:L-histidine biosynthetic process"/>
    <property type="evidence" value="ECO:0007669"/>
    <property type="project" value="UniProtKB-UniRule"/>
</dbReference>
<dbReference type="CDD" id="cd04731">
    <property type="entry name" value="HisF"/>
    <property type="match status" value="1"/>
</dbReference>
<dbReference type="FunFam" id="3.20.20.70:FF:000006">
    <property type="entry name" value="Imidazole glycerol phosphate synthase subunit HisF"/>
    <property type="match status" value="1"/>
</dbReference>
<dbReference type="Gene3D" id="3.20.20.70">
    <property type="entry name" value="Aldolase class I"/>
    <property type="match status" value="1"/>
</dbReference>
<dbReference type="HAMAP" id="MF_01013">
    <property type="entry name" value="HisF"/>
    <property type="match status" value="1"/>
</dbReference>
<dbReference type="InterPro" id="IPR013785">
    <property type="entry name" value="Aldolase_TIM"/>
</dbReference>
<dbReference type="InterPro" id="IPR006062">
    <property type="entry name" value="His_biosynth"/>
</dbReference>
<dbReference type="InterPro" id="IPR004651">
    <property type="entry name" value="HisF"/>
</dbReference>
<dbReference type="InterPro" id="IPR050064">
    <property type="entry name" value="IGPS_HisA/HisF"/>
</dbReference>
<dbReference type="InterPro" id="IPR011060">
    <property type="entry name" value="RibuloseP-bd_barrel"/>
</dbReference>
<dbReference type="NCBIfam" id="TIGR00735">
    <property type="entry name" value="hisF"/>
    <property type="match status" value="1"/>
</dbReference>
<dbReference type="PANTHER" id="PTHR21235:SF2">
    <property type="entry name" value="IMIDAZOLE GLYCEROL PHOSPHATE SYNTHASE HISHF"/>
    <property type="match status" value="1"/>
</dbReference>
<dbReference type="PANTHER" id="PTHR21235">
    <property type="entry name" value="IMIDAZOLE GLYCEROL PHOSPHATE SYNTHASE SUBUNIT HISF/H IGP SYNTHASE SUBUNIT HISF/H"/>
    <property type="match status" value="1"/>
</dbReference>
<dbReference type="Pfam" id="PF00977">
    <property type="entry name" value="His_biosynth"/>
    <property type="match status" value="1"/>
</dbReference>
<dbReference type="SUPFAM" id="SSF51366">
    <property type="entry name" value="Ribulose-phoshate binding barrel"/>
    <property type="match status" value="1"/>
</dbReference>
<proteinExistence type="inferred from homology"/>
<sequence>MDKFAKRIIPCLDVNNGRVVKGINFVGLRDAGDPVEVAKRYNDEGADELCFLDITASSDGRDTIVHVVEEVARQLFIPLTVGGGIRKIDDISRLLNVGCDKVSLNSAAIHNPNLISEAANKFGSQCVVVAIDVKKVDGSYHVFINGGRVDTKIDAYEWAKKVYELGAGEILLTSMDSDGTKNGYDLEVTSKISNLVGIPVIASGGAGTMEHILEAFKFGADAALAASIFHYKEIEISELKKYLLANDIGVRI</sequence>